<name>GNTK_MOUSE</name>
<proteinExistence type="evidence at protein level"/>
<gene>
    <name type="primary">Idnk</name>
</gene>
<dbReference type="EC" id="2.7.1.12"/>
<dbReference type="EMBL" id="BC026742">
    <property type="protein sequence ID" value="AAH26742.1"/>
    <property type="status" value="ALT_INIT"/>
    <property type="molecule type" value="mRNA"/>
</dbReference>
<dbReference type="CCDS" id="CCDS36682.1"/>
<dbReference type="RefSeq" id="NP_932121.2">
    <property type="nucleotide sequence ID" value="NM_198004.3"/>
</dbReference>
<dbReference type="SMR" id="Q8R0J8"/>
<dbReference type="FunCoup" id="Q8R0J8">
    <property type="interactions" value="263"/>
</dbReference>
<dbReference type="STRING" id="10090.ENSMUSP00000060218"/>
<dbReference type="iPTMnet" id="Q8R0J8"/>
<dbReference type="PhosphoSitePlus" id="Q8R0J8"/>
<dbReference type="jPOST" id="Q8R0J8"/>
<dbReference type="PaxDb" id="10090-ENSMUSP00000060218"/>
<dbReference type="ProteomicsDB" id="271242"/>
<dbReference type="Antibodypedia" id="13014">
    <property type="antibodies" value="117 antibodies from 20 providers"/>
</dbReference>
<dbReference type="Ensembl" id="ENSMUST00000051490.15">
    <property type="protein sequence ID" value="ENSMUSP00000060218.8"/>
    <property type="gene ID" value="ENSMUSG00000050002.15"/>
</dbReference>
<dbReference type="GeneID" id="75731"/>
<dbReference type="KEGG" id="mmu:75731"/>
<dbReference type="UCSC" id="uc007qth.2">
    <property type="organism name" value="mouse"/>
</dbReference>
<dbReference type="AGR" id="MGI:1922981"/>
<dbReference type="CTD" id="414328"/>
<dbReference type="MGI" id="MGI:1922981">
    <property type="gene designation" value="Idnk"/>
</dbReference>
<dbReference type="VEuPathDB" id="HostDB:ENSMUSG00000050002"/>
<dbReference type="eggNOG" id="KOG3354">
    <property type="taxonomic scope" value="Eukaryota"/>
</dbReference>
<dbReference type="GeneTree" id="ENSGT00390000003364"/>
<dbReference type="HOGENOM" id="CLU_077168_4_0_1"/>
<dbReference type="InParanoid" id="Q8R0J8"/>
<dbReference type="OMA" id="YEGDDYH"/>
<dbReference type="OrthoDB" id="275177at2759"/>
<dbReference type="PhylomeDB" id="Q8R0J8"/>
<dbReference type="TreeFam" id="TF315136"/>
<dbReference type="UniPathway" id="UPA00792"/>
<dbReference type="BioGRID-ORCS" id="75731">
    <property type="hits" value="4 hits in 80 CRISPR screens"/>
</dbReference>
<dbReference type="ChiTaRS" id="Idnk">
    <property type="organism name" value="mouse"/>
</dbReference>
<dbReference type="PRO" id="PR:Q8R0J8"/>
<dbReference type="Proteomes" id="UP000000589">
    <property type="component" value="Chromosome 13"/>
</dbReference>
<dbReference type="RNAct" id="Q8R0J8">
    <property type="molecule type" value="protein"/>
</dbReference>
<dbReference type="Bgee" id="ENSMUSG00000050002">
    <property type="expression patterns" value="Expressed in facial nucleus and 264 other cell types or tissues"/>
</dbReference>
<dbReference type="ExpressionAtlas" id="Q8R0J8">
    <property type="expression patterns" value="baseline and differential"/>
</dbReference>
<dbReference type="GO" id="GO:0005524">
    <property type="term" value="F:ATP binding"/>
    <property type="evidence" value="ECO:0007669"/>
    <property type="project" value="UniProtKB-KW"/>
</dbReference>
<dbReference type="GO" id="GO:0046316">
    <property type="term" value="F:gluconokinase activity"/>
    <property type="evidence" value="ECO:0007669"/>
    <property type="project" value="UniProtKB-EC"/>
</dbReference>
<dbReference type="GO" id="GO:0005975">
    <property type="term" value="P:carbohydrate metabolic process"/>
    <property type="evidence" value="ECO:0007669"/>
    <property type="project" value="InterPro"/>
</dbReference>
<dbReference type="CDD" id="cd02021">
    <property type="entry name" value="GntK"/>
    <property type="match status" value="1"/>
</dbReference>
<dbReference type="FunFam" id="3.40.50.300:FF:000522">
    <property type="entry name" value="Gluconokinase"/>
    <property type="match status" value="1"/>
</dbReference>
<dbReference type="Gene3D" id="3.40.50.300">
    <property type="entry name" value="P-loop containing nucleotide triphosphate hydrolases"/>
    <property type="match status" value="1"/>
</dbReference>
<dbReference type="InterPro" id="IPR027417">
    <property type="entry name" value="P-loop_NTPase"/>
</dbReference>
<dbReference type="InterPro" id="IPR031322">
    <property type="entry name" value="Shikimate/glucono_kinase"/>
</dbReference>
<dbReference type="InterPro" id="IPR006001">
    <property type="entry name" value="Therm_gnt_kin"/>
</dbReference>
<dbReference type="NCBIfam" id="TIGR01313">
    <property type="entry name" value="therm_gnt_kin"/>
    <property type="match status" value="1"/>
</dbReference>
<dbReference type="PANTHER" id="PTHR43442">
    <property type="entry name" value="GLUCONOKINASE-RELATED"/>
    <property type="match status" value="1"/>
</dbReference>
<dbReference type="PANTHER" id="PTHR43442:SF3">
    <property type="entry name" value="GLUCONOKINASE-RELATED"/>
    <property type="match status" value="1"/>
</dbReference>
<dbReference type="Pfam" id="PF01202">
    <property type="entry name" value="SKI"/>
    <property type="match status" value="1"/>
</dbReference>
<dbReference type="SUPFAM" id="SSF52540">
    <property type="entry name" value="P-loop containing nucleoside triphosphate hydrolases"/>
    <property type="match status" value="1"/>
</dbReference>
<protein>
    <recommendedName>
        <fullName>Probable gluconokinase</fullName>
        <ecNumber>2.7.1.12</ecNumber>
    </recommendedName>
    <alternativeName>
        <fullName>Gluconate kinase</fullName>
    </alternativeName>
</protein>
<reference key="1">
    <citation type="journal article" date="2004" name="Genome Res.">
        <title>The status, quality, and expansion of the NIH full-length cDNA project: the Mammalian Gene Collection (MGC).</title>
        <authorList>
            <consortium name="The MGC Project Team"/>
        </authorList>
    </citation>
    <scope>NUCLEOTIDE SEQUENCE [LARGE SCALE MRNA]</scope>
    <source>
        <strain>FVB/N</strain>
        <tissue>Salivary gland</tissue>
    </source>
</reference>
<reference key="2">
    <citation type="journal article" date="2010" name="Cell">
        <title>A tissue-specific atlas of mouse protein phosphorylation and expression.</title>
        <authorList>
            <person name="Huttlin E.L."/>
            <person name="Jedrychowski M.P."/>
            <person name="Elias J.E."/>
            <person name="Goswami T."/>
            <person name="Rad R."/>
            <person name="Beausoleil S.A."/>
            <person name="Villen J."/>
            <person name="Haas W."/>
            <person name="Sowa M.E."/>
            <person name="Gygi S.P."/>
        </authorList>
    </citation>
    <scope>IDENTIFICATION BY MASS SPECTROMETRY [LARGE SCALE ANALYSIS]</scope>
    <source>
        <tissue>Kidney</tissue>
        <tissue>Liver</tissue>
        <tissue>Spleen</tissue>
    </source>
</reference>
<feature type="chain" id="PRO_0000327371" description="Probable gluconokinase">
    <location>
        <begin position="1"/>
        <end position="184"/>
    </location>
</feature>
<feature type="binding site" evidence="1">
    <location>
        <begin position="11"/>
        <end position="18"/>
    </location>
    <ligand>
        <name>ATP</name>
        <dbReference type="ChEBI" id="CHEBI:30616"/>
    </ligand>
</feature>
<sequence>MEAPGVLLVMGVSGSGKSTVGALLASKLGWKFYDADDYHSEENRIKMAKGVPLSDQDRIPWLCTLHDILLRDVALGQPVVLACSALKKTYRDILIRGGSDAPLKSDDSAKEPLAGGKLLVVYLCGSFDIIYGRLLQRKGHFMPPELLQSQFSILEPPSAPENFIQVSVDKSLPEITAAVMEALK</sequence>
<organism>
    <name type="scientific">Mus musculus</name>
    <name type="common">Mouse</name>
    <dbReference type="NCBI Taxonomy" id="10090"/>
    <lineage>
        <taxon>Eukaryota</taxon>
        <taxon>Metazoa</taxon>
        <taxon>Chordata</taxon>
        <taxon>Craniata</taxon>
        <taxon>Vertebrata</taxon>
        <taxon>Euteleostomi</taxon>
        <taxon>Mammalia</taxon>
        <taxon>Eutheria</taxon>
        <taxon>Euarchontoglires</taxon>
        <taxon>Glires</taxon>
        <taxon>Rodentia</taxon>
        <taxon>Myomorpha</taxon>
        <taxon>Muroidea</taxon>
        <taxon>Muridae</taxon>
        <taxon>Murinae</taxon>
        <taxon>Mus</taxon>
        <taxon>Mus</taxon>
    </lineage>
</organism>
<keyword id="KW-0067">ATP-binding</keyword>
<keyword id="KW-0418">Kinase</keyword>
<keyword id="KW-0547">Nucleotide-binding</keyword>
<keyword id="KW-1185">Reference proteome</keyword>
<keyword id="KW-0808">Transferase</keyword>
<accession>Q8R0J8</accession>
<evidence type="ECO:0000255" key="1"/>
<evidence type="ECO:0000305" key="2"/>
<comment type="catalytic activity">
    <reaction>
        <text>D-gluconate + ATP = 6-phospho-D-gluconate + ADP + H(+)</text>
        <dbReference type="Rhea" id="RHEA:19433"/>
        <dbReference type="ChEBI" id="CHEBI:15378"/>
        <dbReference type="ChEBI" id="CHEBI:18391"/>
        <dbReference type="ChEBI" id="CHEBI:30616"/>
        <dbReference type="ChEBI" id="CHEBI:58759"/>
        <dbReference type="ChEBI" id="CHEBI:456216"/>
        <dbReference type="EC" id="2.7.1.12"/>
    </reaction>
</comment>
<comment type="pathway">
    <text>Carbohydrate acid metabolism; D-gluconate degradation.</text>
</comment>
<comment type="similarity">
    <text evidence="2">Belongs to the gluconokinase GntK/GntV family.</text>
</comment>
<comment type="sequence caution" evidence="2">
    <conflict type="erroneous initiation">
        <sequence resource="EMBL-CDS" id="AAH26742"/>
    </conflict>
    <text>Truncated N-terminus.</text>
</comment>